<proteinExistence type="inferred from homology"/>
<sequence>MNNSRMSSVSTQKTTGRSALGTKSALAAIIATTMMVSVASAASLQTTKATEAASTGWATQSGGTTGGAKASSSKIYAVKSISEFKAALNGTDSSPKIIQVTGAIDISGGKAYTSFDDQKARSQISIPSNTTIIGIGNKGKFTNGSLVVKGVSNVILRNLYIETPVDVAPHYEEGDGWNAEWDAVVIDSTDHVWVDHVTISDGSFTDDKYTTKNGEKYVQHDGSLDIKRGSDYVTVSNSRFELHDKTILIGHSDNNGSQDAGKLRVTFHNNLFDRVGERTPRVRFGSVHAYNNVYVGDVNHKAYRYQYSFGIGTSGSLLSESNAFTIDNMKKISGRDKECSVVKAFNGKIFSDKGSIINGASYNLNGCGFGFSAYSAKIPYKYSAQTITTSLAGSISSNAGYGKL</sequence>
<accession>P0C1A4</accession>
<accession>P18210</accession>
<name>PLYE2_DICCH</name>
<organism>
    <name type="scientific">Dickeya chrysanthemi</name>
    <name type="common">Pectobacterium chrysanthemi</name>
    <name type="synonym">Erwinia chrysanthemi</name>
    <dbReference type="NCBI Taxonomy" id="556"/>
    <lineage>
        <taxon>Bacteria</taxon>
        <taxon>Pseudomonadati</taxon>
        <taxon>Pseudomonadota</taxon>
        <taxon>Gammaproteobacteria</taxon>
        <taxon>Enterobacterales</taxon>
        <taxon>Pectobacteriaceae</taxon>
        <taxon>Dickeya</taxon>
    </lineage>
</organism>
<gene>
    <name type="primary">pelE</name>
</gene>
<evidence type="ECO:0000250" key="1"/>
<evidence type="ECO:0000255" key="2"/>
<evidence type="ECO:0000305" key="3"/>
<reference key="1">
    <citation type="journal article" date="1989" name="Mol. Microbiol.">
        <title>Relationship between the pel genes of the pelADE cluster in Erwinia chrysanthemi strain B374.</title>
        <authorList>
            <person name="van Gijsegem F."/>
        </authorList>
    </citation>
    <scope>NUCLEOTIDE SEQUENCE [GENOMIC DNA]</scope>
    <source>
        <strain>B374</strain>
    </source>
</reference>
<feature type="signal peptide" evidence="1">
    <location>
        <begin position="1"/>
        <end position="41"/>
    </location>
</feature>
<feature type="chain" id="PRO_0000024858" description="Pectate lyase E">
    <location>
        <begin position="42"/>
        <end position="404"/>
    </location>
</feature>
<feature type="active site" evidence="2">
    <location>
        <position position="278"/>
    </location>
</feature>
<feature type="binding site" evidence="1">
    <location>
        <position position="182"/>
    </location>
    <ligand>
        <name>Ca(2+)</name>
        <dbReference type="ChEBI" id="CHEBI:29108"/>
    </ligand>
</feature>
<feature type="binding site" evidence="1">
    <location>
        <position position="225"/>
    </location>
    <ligand>
        <name>Ca(2+)</name>
        <dbReference type="ChEBI" id="CHEBI:29108"/>
    </ligand>
</feature>
<comment type="function">
    <text>Involved in maceration and soft-rotting of plant tissue. Pectate lyases have been implicated as pathogenicity factors which induce maceration or rotting of plant tissue. PelE is sufficient to induce these effects under laboratory conditions.</text>
</comment>
<comment type="catalytic activity">
    <reaction>
        <text>Eliminative cleavage of (1-&gt;4)-alpha-D-galacturonan to give oligosaccharides with 4-deoxy-alpha-D-galact-4-enuronosyl groups at their non-reducing ends.</text>
        <dbReference type="EC" id="4.2.2.2"/>
    </reaction>
</comment>
<comment type="cofactor">
    <cofactor evidence="1">
        <name>Ca(2+)</name>
        <dbReference type="ChEBI" id="CHEBI:29108"/>
    </cofactor>
    <text evidence="1">Binds 1 Ca(2+) ion per subunit.</text>
</comment>
<comment type="pathway">
    <text>Glycan metabolism; pectin degradation; 2-dehydro-3-deoxy-D-gluconate from pectin: step 2/5.</text>
</comment>
<comment type="subcellular location">
    <subcellularLocation>
        <location>Secreted</location>
    </subcellularLocation>
</comment>
<comment type="similarity">
    <text evidence="3">Belongs to the polysaccharide lyase 1 family. PLBC subfamily.</text>
</comment>
<keyword id="KW-0106">Calcium</keyword>
<keyword id="KW-0456">Lyase</keyword>
<keyword id="KW-0479">Metal-binding</keyword>
<keyword id="KW-0964">Secreted</keyword>
<keyword id="KW-0732">Signal</keyword>
<protein>
    <recommendedName>
        <fullName>Pectate lyase E</fullName>
        <ecNumber>4.2.2.2</ecNumber>
    </recommendedName>
</protein>
<dbReference type="EC" id="4.2.2.2"/>
<dbReference type="EMBL" id="X17284">
    <property type="protein sequence ID" value="CAA35175.1"/>
    <property type="molecule type" value="Genomic_DNA"/>
</dbReference>
<dbReference type="PIR" id="JQ0190">
    <property type="entry name" value="WZWCPE"/>
</dbReference>
<dbReference type="SMR" id="P0C1A4"/>
<dbReference type="CAZy" id="PL1">
    <property type="family name" value="Polysaccharide Lyase Family 1"/>
</dbReference>
<dbReference type="UniPathway" id="UPA00545">
    <property type="reaction ID" value="UER00824"/>
</dbReference>
<dbReference type="GO" id="GO:0005576">
    <property type="term" value="C:extracellular region"/>
    <property type="evidence" value="ECO:0007669"/>
    <property type="project" value="UniProtKB-SubCell"/>
</dbReference>
<dbReference type="GO" id="GO:0046872">
    <property type="term" value="F:metal ion binding"/>
    <property type="evidence" value="ECO:0007669"/>
    <property type="project" value="UniProtKB-KW"/>
</dbReference>
<dbReference type="GO" id="GO:0030570">
    <property type="term" value="F:pectate lyase activity"/>
    <property type="evidence" value="ECO:0007669"/>
    <property type="project" value="UniProtKB-EC"/>
</dbReference>
<dbReference type="GO" id="GO:0045490">
    <property type="term" value="P:pectin catabolic process"/>
    <property type="evidence" value="ECO:0007669"/>
    <property type="project" value="UniProtKB-UniPathway"/>
</dbReference>
<dbReference type="Gene3D" id="2.160.20.10">
    <property type="entry name" value="Single-stranded right-handed beta-helix, Pectin lyase-like"/>
    <property type="match status" value="1"/>
</dbReference>
<dbReference type="InterPro" id="IPR002022">
    <property type="entry name" value="Pec_lyase"/>
</dbReference>
<dbReference type="InterPro" id="IPR012334">
    <property type="entry name" value="Pectin_lyas_fold"/>
</dbReference>
<dbReference type="InterPro" id="IPR011050">
    <property type="entry name" value="Pectin_lyase_fold/virulence"/>
</dbReference>
<dbReference type="InterPro" id="IPR045032">
    <property type="entry name" value="PEL"/>
</dbReference>
<dbReference type="PANTHER" id="PTHR31683">
    <property type="entry name" value="PECTATE LYASE 18-RELATED"/>
    <property type="match status" value="1"/>
</dbReference>
<dbReference type="PANTHER" id="PTHR31683:SF18">
    <property type="entry name" value="PECTATE LYASE 21-RELATED"/>
    <property type="match status" value="1"/>
</dbReference>
<dbReference type="Pfam" id="PF00544">
    <property type="entry name" value="Pectate_lyase_4"/>
    <property type="match status" value="1"/>
</dbReference>
<dbReference type="SMART" id="SM00656">
    <property type="entry name" value="Amb_all"/>
    <property type="match status" value="1"/>
</dbReference>
<dbReference type="SUPFAM" id="SSF51126">
    <property type="entry name" value="Pectin lyase-like"/>
    <property type="match status" value="1"/>
</dbReference>